<evidence type="ECO:0000255" key="1">
    <source>
        <dbReference type="HAMAP-Rule" id="MF_00074"/>
    </source>
</evidence>
<name>RSMG_ACIAD</name>
<feature type="chain" id="PRO_0000184204" description="Ribosomal RNA small subunit methyltransferase G">
    <location>
        <begin position="1"/>
        <end position="212"/>
    </location>
</feature>
<feature type="binding site" evidence="1">
    <location>
        <position position="76"/>
    </location>
    <ligand>
        <name>S-adenosyl-L-methionine</name>
        <dbReference type="ChEBI" id="CHEBI:59789"/>
    </ligand>
</feature>
<feature type="binding site" evidence="1">
    <location>
        <position position="81"/>
    </location>
    <ligand>
        <name>S-adenosyl-L-methionine</name>
        <dbReference type="ChEBI" id="CHEBI:59789"/>
    </ligand>
</feature>
<feature type="binding site" evidence="1">
    <location>
        <begin position="127"/>
        <end position="128"/>
    </location>
    <ligand>
        <name>S-adenosyl-L-methionine</name>
        <dbReference type="ChEBI" id="CHEBI:59789"/>
    </ligand>
</feature>
<feature type="binding site" evidence="1">
    <location>
        <position position="145"/>
    </location>
    <ligand>
        <name>S-adenosyl-L-methionine</name>
        <dbReference type="ChEBI" id="CHEBI:59789"/>
    </ligand>
</feature>
<accession>Q6F9W7</accession>
<sequence length="212" mass="23802">MHPFLQELKQGSQALGLDLSDEVLGLLLKYQDALVLWNKAYNLTAIRDPKEMLVKHLLDSLSILKDLPQGRLLDVGTGGGMPGMIIALCQPERNCVLLDSNGKKIRFLKQFIADLKLKNVVAVQTRVENEESIQELGKFDVITSRAFASLLDFVDAARPYMYESTIIAAMKGLVPTEEMQQLKAEFSCQVIGLQVPRLDEQRHLLLLQQIKN</sequence>
<keyword id="KW-0963">Cytoplasm</keyword>
<keyword id="KW-0489">Methyltransferase</keyword>
<keyword id="KW-0698">rRNA processing</keyword>
<keyword id="KW-0949">S-adenosyl-L-methionine</keyword>
<keyword id="KW-0808">Transferase</keyword>
<protein>
    <recommendedName>
        <fullName evidence="1">Ribosomal RNA small subunit methyltransferase G</fullName>
        <ecNumber evidence="1">2.1.1.170</ecNumber>
    </recommendedName>
    <alternativeName>
        <fullName evidence="1">16S rRNA 7-methylguanosine methyltransferase</fullName>
        <shortName evidence="1">16S rRNA m7G methyltransferase</shortName>
    </alternativeName>
</protein>
<gene>
    <name evidence="1" type="primary">rsmG</name>
    <name type="ordered locus">ACIAD2368</name>
</gene>
<comment type="function">
    <text evidence="1">Specifically methylates the N7 position of guanine in position 527 of 16S rRNA.</text>
</comment>
<comment type="catalytic activity">
    <reaction evidence="1">
        <text>guanosine(527) in 16S rRNA + S-adenosyl-L-methionine = N(7)-methylguanosine(527) in 16S rRNA + S-adenosyl-L-homocysteine</text>
        <dbReference type="Rhea" id="RHEA:42732"/>
        <dbReference type="Rhea" id="RHEA-COMP:10209"/>
        <dbReference type="Rhea" id="RHEA-COMP:10210"/>
        <dbReference type="ChEBI" id="CHEBI:57856"/>
        <dbReference type="ChEBI" id="CHEBI:59789"/>
        <dbReference type="ChEBI" id="CHEBI:74269"/>
        <dbReference type="ChEBI" id="CHEBI:74480"/>
        <dbReference type="EC" id="2.1.1.170"/>
    </reaction>
</comment>
<comment type="subcellular location">
    <subcellularLocation>
        <location evidence="1">Cytoplasm</location>
    </subcellularLocation>
</comment>
<comment type="similarity">
    <text evidence="1">Belongs to the methyltransferase superfamily. RNA methyltransferase RsmG family.</text>
</comment>
<reference key="1">
    <citation type="journal article" date="2004" name="Nucleic Acids Res.">
        <title>Unique features revealed by the genome sequence of Acinetobacter sp. ADP1, a versatile and naturally transformation competent bacterium.</title>
        <authorList>
            <person name="Barbe V."/>
            <person name="Vallenet D."/>
            <person name="Fonknechten N."/>
            <person name="Kreimeyer A."/>
            <person name="Oztas S."/>
            <person name="Labarre L."/>
            <person name="Cruveiller S."/>
            <person name="Robert C."/>
            <person name="Duprat S."/>
            <person name="Wincker P."/>
            <person name="Ornston L.N."/>
            <person name="Weissenbach J."/>
            <person name="Marliere P."/>
            <person name="Cohen G.N."/>
            <person name="Medigue C."/>
        </authorList>
    </citation>
    <scope>NUCLEOTIDE SEQUENCE [LARGE SCALE GENOMIC DNA]</scope>
    <source>
        <strain>ATCC 33305 / BD413 / ADP1</strain>
    </source>
</reference>
<dbReference type="EC" id="2.1.1.170" evidence="1"/>
<dbReference type="EMBL" id="CR543861">
    <property type="protein sequence ID" value="CAG69146.1"/>
    <property type="molecule type" value="Genomic_DNA"/>
</dbReference>
<dbReference type="RefSeq" id="WP_004928203.1">
    <property type="nucleotide sequence ID" value="NC_005966.1"/>
</dbReference>
<dbReference type="SMR" id="Q6F9W7"/>
<dbReference type="STRING" id="202950.GCA_001485005_00040"/>
<dbReference type="GeneID" id="45234683"/>
<dbReference type="KEGG" id="aci:ACIAD2368"/>
<dbReference type="eggNOG" id="COG0357">
    <property type="taxonomic scope" value="Bacteria"/>
</dbReference>
<dbReference type="HOGENOM" id="CLU_065341_2_0_6"/>
<dbReference type="OrthoDB" id="9808773at2"/>
<dbReference type="BioCyc" id="ASP62977:ACIAD_RS10830-MONOMER"/>
<dbReference type="Proteomes" id="UP000000430">
    <property type="component" value="Chromosome"/>
</dbReference>
<dbReference type="GO" id="GO:0005829">
    <property type="term" value="C:cytosol"/>
    <property type="evidence" value="ECO:0007669"/>
    <property type="project" value="TreeGrafter"/>
</dbReference>
<dbReference type="GO" id="GO:0070043">
    <property type="term" value="F:rRNA (guanine-N7-)-methyltransferase activity"/>
    <property type="evidence" value="ECO:0007669"/>
    <property type="project" value="UniProtKB-UniRule"/>
</dbReference>
<dbReference type="Gene3D" id="3.40.50.150">
    <property type="entry name" value="Vaccinia Virus protein VP39"/>
    <property type="match status" value="1"/>
</dbReference>
<dbReference type="HAMAP" id="MF_00074">
    <property type="entry name" value="16SrRNA_methyltr_G"/>
    <property type="match status" value="1"/>
</dbReference>
<dbReference type="InterPro" id="IPR003682">
    <property type="entry name" value="rRNA_ssu_MeTfrase_G"/>
</dbReference>
<dbReference type="InterPro" id="IPR029063">
    <property type="entry name" value="SAM-dependent_MTases_sf"/>
</dbReference>
<dbReference type="NCBIfam" id="TIGR00138">
    <property type="entry name" value="rsmG_gidB"/>
    <property type="match status" value="1"/>
</dbReference>
<dbReference type="PANTHER" id="PTHR31760">
    <property type="entry name" value="S-ADENOSYL-L-METHIONINE-DEPENDENT METHYLTRANSFERASES SUPERFAMILY PROTEIN"/>
    <property type="match status" value="1"/>
</dbReference>
<dbReference type="PANTHER" id="PTHR31760:SF0">
    <property type="entry name" value="S-ADENOSYL-L-METHIONINE-DEPENDENT METHYLTRANSFERASES SUPERFAMILY PROTEIN"/>
    <property type="match status" value="1"/>
</dbReference>
<dbReference type="Pfam" id="PF02527">
    <property type="entry name" value="GidB"/>
    <property type="match status" value="1"/>
</dbReference>
<dbReference type="PIRSF" id="PIRSF003078">
    <property type="entry name" value="GidB"/>
    <property type="match status" value="1"/>
</dbReference>
<dbReference type="SUPFAM" id="SSF53335">
    <property type="entry name" value="S-adenosyl-L-methionine-dependent methyltransferases"/>
    <property type="match status" value="1"/>
</dbReference>
<proteinExistence type="inferred from homology"/>
<organism>
    <name type="scientific">Acinetobacter baylyi (strain ATCC 33305 / BD413 / ADP1)</name>
    <dbReference type="NCBI Taxonomy" id="62977"/>
    <lineage>
        <taxon>Bacteria</taxon>
        <taxon>Pseudomonadati</taxon>
        <taxon>Pseudomonadota</taxon>
        <taxon>Gammaproteobacteria</taxon>
        <taxon>Moraxellales</taxon>
        <taxon>Moraxellaceae</taxon>
        <taxon>Acinetobacter</taxon>
    </lineage>
</organism>